<reference key="1">
    <citation type="journal article" date="2008" name="PLoS ONE">
        <title>Genetic basis of virulence attenuation revealed by comparative genomic analysis of Mycobacterium tuberculosis strain H37Ra versus H37Rv.</title>
        <authorList>
            <person name="Zheng H."/>
            <person name="Lu L."/>
            <person name="Wang B."/>
            <person name="Pu S."/>
            <person name="Zhang X."/>
            <person name="Zhu G."/>
            <person name="Shi W."/>
            <person name="Zhang L."/>
            <person name="Wang H."/>
            <person name="Wang S."/>
            <person name="Zhao G."/>
            <person name="Zhang Y."/>
        </authorList>
    </citation>
    <scope>NUCLEOTIDE SEQUENCE [LARGE SCALE GENOMIC DNA]</scope>
    <source>
        <strain>ATCC 25177 / H37Ra</strain>
    </source>
</reference>
<accession>A5U5U2</accession>
<name>RUVB_MYCTA</name>
<comment type="function">
    <text evidence="1">The RuvA-RuvB-RuvC complex processes Holliday junction (HJ) DNA during genetic recombination and DNA repair, while the RuvA-RuvB complex plays an important role in the rescue of blocked DNA replication forks via replication fork reversal (RFR). RuvA specifically binds to HJ cruciform DNA, conferring on it an open structure. The RuvB hexamer acts as an ATP-dependent pump, pulling dsDNA into and through the RuvAB complex. RuvB forms 2 homohexamers on either side of HJ DNA bound by 1 or 2 RuvA tetramers; 4 subunits per hexamer contact DNA at a time. Coordinated motions by a converter formed by DNA-disengaged RuvB subunits stimulates ATP hydrolysis and nucleotide exchange. Immobilization of the converter enables RuvB to convert the ATP-contained energy into a lever motion, pulling 2 nucleotides of DNA out of the RuvA tetramer per ATP hydrolyzed, thus driving DNA branch migration. The RuvB motors rotate together with the DNA substrate, which together with the progressing nucleotide cycle form the mechanistic basis for DNA recombination by continuous HJ branch migration. Branch migration allows RuvC to scan DNA until it finds its consensus sequence, where it cleaves and resolves cruciform DNA.</text>
</comment>
<comment type="catalytic activity">
    <reaction evidence="1">
        <text>ATP + H2O = ADP + phosphate + H(+)</text>
        <dbReference type="Rhea" id="RHEA:13065"/>
        <dbReference type="ChEBI" id="CHEBI:15377"/>
        <dbReference type="ChEBI" id="CHEBI:15378"/>
        <dbReference type="ChEBI" id="CHEBI:30616"/>
        <dbReference type="ChEBI" id="CHEBI:43474"/>
        <dbReference type="ChEBI" id="CHEBI:456216"/>
    </reaction>
</comment>
<comment type="subunit">
    <text evidence="1">Homohexamer. Forms an RuvA(8)-RuvB(12)-Holliday junction (HJ) complex. HJ DNA is sandwiched between 2 RuvA tetramers; dsDNA enters through RuvA and exits via RuvB. An RuvB hexamer assembles on each DNA strand where it exits the tetramer. Each RuvB hexamer is contacted by two RuvA subunits (via domain III) on 2 adjacent RuvB subunits; this complex drives branch migration. In the full resolvosome a probable DNA-RuvA(4)-RuvB(12)-RuvC(2) complex forms which resolves the HJ.</text>
</comment>
<comment type="subcellular location">
    <subcellularLocation>
        <location evidence="1">Cytoplasm</location>
    </subcellularLocation>
</comment>
<comment type="domain">
    <text evidence="1">Has 3 domains, the large (RuvB-L) and small ATPase (RuvB-S) domains and the C-terminal head (RuvB-H) domain. The head domain binds DNA, while the ATPase domains jointly bind ATP, ADP or are empty depending on the state of the subunit in the translocation cycle. During a single DNA translocation step the structure of each domain remains the same, but their relative positions change.</text>
</comment>
<comment type="similarity">
    <text evidence="1">Belongs to the RuvB family.</text>
</comment>
<gene>
    <name evidence="1" type="primary">ruvB</name>
    <name type="ordered locus">MRA_2621</name>
</gene>
<dbReference type="EC" id="3.6.4.-" evidence="1"/>
<dbReference type="EMBL" id="CP000611">
    <property type="protein sequence ID" value="ABQ74392.1"/>
    <property type="molecule type" value="Genomic_DNA"/>
</dbReference>
<dbReference type="RefSeq" id="WP_003413416.1">
    <property type="nucleotide sequence ID" value="NZ_CP016972.1"/>
</dbReference>
<dbReference type="SMR" id="A5U5U2"/>
<dbReference type="GeneID" id="45426594"/>
<dbReference type="KEGG" id="mra:MRA_2621"/>
<dbReference type="eggNOG" id="COG2255">
    <property type="taxonomic scope" value="Bacteria"/>
</dbReference>
<dbReference type="HOGENOM" id="CLU_055599_1_0_11"/>
<dbReference type="Proteomes" id="UP000001988">
    <property type="component" value="Chromosome"/>
</dbReference>
<dbReference type="GO" id="GO:0005737">
    <property type="term" value="C:cytoplasm"/>
    <property type="evidence" value="ECO:0007669"/>
    <property type="project" value="UniProtKB-SubCell"/>
</dbReference>
<dbReference type="GO" id="GO:0048476">
    <property type="term" value="C:Holliday junction resolvase complex"/>
    <property type="evidence" value="ECO:0007669"/>
    <property type="project" value="UniProtKB-UniRule"/>
</dbReference>
<dbReference type="GO" id="GO:0005524">
    <property type="term" value="F:ATP binding"/>
    <property type="evidence" value="ECO:0007669"/>
    <property type="project" value="UniProtKB-UniRule"/>
</dbReference>
<dbReference type="GO" id="GO:0016887">
    <property type="term" value="F:ATP hydrolysis activity"/>
    <property type="evidence" value="ECO:0007669"/>
    <property type="project" value="InterPro"/>
</dbReference>
<dbReference type="GO" id="GO:0000400">
    <property type="term" value="F:four-way junction DNA binding"/>
    <property type="evidence" value="ECO:0007669"/>
    <property type="project" value="UniProtKB-UniRule"/>
</dbReference>
<dbReference type="GO" id="GO:0009378">
    <property type="term" value="F:four-way junction helicase activity"/>
    <property type="evidence" value="ECO:0007669"/>
    <property type="project" value="InterPro"/>
</dbReference>
<dbReference type="GO" id="GO:0006310">
    <property type="term" value="P:DNA recombination"/>
    <property type="evidence" value="ECO:0007669"/>
    <property type="project" value="UniProtKB-UniRule"/>
</dbReference>
<dbReference type="GO" id="GO:0006281">
    <property type="term" value="P:DNA repair"/>
    <property type="evidence" value="ECO:0007669"/>
    <property type="project" value="UniProtKB-UniRule"/>
</dbReference>
<dbReference type="CDD" id="cd00009">
    <property type="entry name" value="AAA"/>
    <property type="match status" value="1"/>
</dbReference>
<dbReference type="Gene3D" id="1.10.8.60">
    <property type="match status" value="1"/>
</dbReference>
<dbReference type="Gene3D" id="3.40.50.300">
    <property type="entry name" value="P-loop containing nucleotide triphosphate hydrolases"/>
    <property type="match status" value="1"/>
</dbReference>
<dbReference type="Gene3D" id="1.10.10.10">
    <property type="entry name" value="Winged helix-like DNA-binding domain superfamily/Winged helix DNA-binding domain"/>
    <property type="match status" value="1"/>
</dbReference>
<dbReference type="HAMAP" id="MF_00016">
    <property type="entry name" value="DNA_HJ_migration_RuvB"/>
    <property type="match status" value="1"/>
</dbReference>
<dbReference type="InterPro" id="IPR003593">
    <property type="entry name" value="AAA+_ATPase"/>
</dbReference>
<dbReference type="InterPro" id="IPR041445">
    <property type="entry name" value="AAA_lid_4"/>
</dbReference>
<dbReference type="InterPro" id="IPR004605">
    <property type="entry name" value="DNA_helicase_Holl-junc_RuvB"/>
</dbReference>
<dbReference type="InterPro" id="IPR027417">
    <property type="entry name" value="P-loop_NTPase"/>
</dbReference>
<dbReference type="InterPro" id="IPR008824">
    <property type="entry name" value="RuvB-like_N"/>
</dbReference>
<dbReference type="InterPro" id="IPR008823">
    <property type="entry name" value="RuvB_C"/>
</dbReference>
<dbReference type="InterPro" id="IPR036388">
    <property type="entry name" value="WH-like_DNA-bd_sf"/>
</dbReference>
<dbReference type="InterPro" id="IPR036390">
    <property type="entry name" value="WH_DNA-bd_sf"/>
</dbReference>
<dbReference type="NCBIfam" id="NF000868">
    <property type="entry name" value="PRK00080.1"/>
    <property type="match status" value="1"/>
</dbReference>
<dbReference type="NCBIfam" id="TIGR00635">
    <property type="entry name" value="ruvB"/>
    <property type="match status" value="1"/>
</dbReference>
<dbReference type="PANTHER" id="PTHR42848">
    <property type="match status" value="1"/>
</dbReference>
<dbReference type="PANTHER" id="PTHR42848:SF1">
    <property type="entry name" value="HOLLIDAY JUNCTION BRANCH MIGRATION COMPLEX SUBUNIT RUVB"/>
    <property type="match status" value="1"/>
</dbReference>
<dbReference type="Pfam" id="PF17864">
    <property type="entry name" value="AAA_lid_4"/>
    <property type="match status" value="1"/>
</dbReference>
<dbReference type="Pfam" id="PF05491">
    <property type="entry name" value="RuvB_C"/>
    <property type="match status" value="1"/>
</dbReference>
<dbReference type="Pfam" id="PF05496">
    <property type="entry name" value="RuvB_N"/>
    <property type="match status" value="1"/>
</dbReference>
<dbReference type="PRINTS" id="PR00830">
    <property type="entry name" value="ENDOLAPTASE"/>
</dbReference>
<dbReference type="SMART" id="SM00382">
    <property type="entry name" value="AAA"/>
    <property type="match status" value="1"/>
</dbReference>
<dbReference type="SUPFAM" id="SSF52540">
    <property type="entry name" value="P-loop containing nucleoside triphosphate hydrolases"/>
    <property type="match status" value="1"/>
</dbReference>
<dbReference type="SUPFAM" id="SSF46785">
    <property type="entry name" value="Winged helix' DNA-binding domain"/>
    <property type="match status" value="1"/>
</dbReference>
<evidence type="ECO:0000255" key="1">
    <source>
        <dbReference type="HAMAP-Rule" id="MF_00016"/>
    </source>
</evidence>
<keyword id="KW-0067">ATP-binding</keyword>
<keyword id="KW-0963">Cytoplasm</keyword>
<keyword id="KW-0227">DNA damage</keyword>
<keyword id="KW-0233">DNA recombination</keyword>
<keyword id="KW-0234">DNA repair</keyword>
<keyword id="KW-0238">DNA-binding</keyword>
<keyword id="KW-0378">Hydrolase</keyword>
<keyword id="KW-0547">Nucleotide-binding</keyword>
<keyword id="KW-1185">Reference proteome</keyword>
<sequence length="344" mass="36627">MTERSDRDVSPALTVGEGDIDVSLRPRSLREFIGQPRVREQLQLVIEGAKNRGGTPDHILLSGPPGLGKTSLAMIIAAELGSSLRVTSGPALERAGDLAAMLSNLVEHDVLFIDEIHRIARPAEEMLYLAMEDFRVDVVVGKGPGATSIPLEVAPFTLVGATTRSGALTGPLRDRFGFTAHMDFYEPAELERVLARSAGILGIELGADAGAEIARRSRGTPRIANRLLRRVRDFAEVRADGVITRDVAKAALEVYDVDELGLDRLDRAVLSALTRSFGGGPVGVSTLAVAVGEEAATVEEVCEPFLVRAGMVARTPRGRVATALAWTHLGMTPPVGASQPGLFE</sequence>
<protein>
    <recommendedName>
        <fullName evidence="1">Holliday junction branch migration complex subunit RuvB</fullName>
        <ecNumber evidence="1">3.6.4.-</ecNumber>
    </recommendedName>
</protein>
<feature type="chain" id="PRO_1000001431" description="Holliday junction branch migration complex subunit RuvB">
    <location>
        <begin position="1"/>
        <end position="344"/>
    </location>
</feature>
<feature type="region of interest" description="Large ATPase domain (RuvB-L)" evidence="1">
    <location>
        <begin position="1"/>
        <end position="185"/>
    </location>
</feature>
<feature type="region of interest" description="Small ATPAse domain (RuvB-S)" evidence="1">
    <location>
        <begin position="186"/>
        <end position="256"/>
    </location>
</feature>
<feature type="region of interest" description="Head domain (RuvB-H)" evidence="1">
    <location>
        <begin position="259"/>
        <end position="344"/>
    </location>
</feature>
<feature type="binding site" evidence="1">
    <location>
        <position position="24"/>
    </location>
    <ligand>
        <name>ATP</name>
        <dbReference type="ChEBI" id="CHEBI:30616"/>
    </ligand>
</feature>
<feature type="binding site" evidence="1">
    <location>
        <position position="25"/>
    </location>
    <ligand>
        <name>ATP</name>
        <dbReference type="ChEBI" id="CHEBI:30616"/>
    </ligand>
</feature>
<feature type="binding site" evidence="1">
    <location>
        <position position="66"/>
    </location>
    <ligand>
        <name>ATP</name>
        <dbReference type="ChEBI" id="CHEBI:30616"/>
    </ligand>
</feature>
<feature type="binding site" evidence="1">
    <location>
        <position position="69"/>
    </location>
    <ligand>
        <name>ATP</name>
        <dbReference type="ChEBI" id="CHEBI:30616"/>
    </ligand>
</feature>
<feature type="binding site" evidence="1">
    <location>
        <position position="70"/>
    </location>
    <ligand>
        <name>ATP</name>
        <dbReference type="ChEBI" id="CHEBI:30616"/>
    </ligand>
</feature>
<feature type="binding site" evidence="1">
    <location>
        <position position="70"/>
    </location>
    <ligand>
        <name>Mg(2+)</name>
        <dbReference type="ChEBI" id="CHEBI:18420"/>
    </ligand>
</feature>
<feature type="binding site" evidence="1">
    <location>
        <position position="71"/>
    </location>
    <ligand>
        <name>ATP</name>
        <dbReference type="ChEBI" id="CHEBI:30616"/>
    </ligand>
</feature>
<feature type="binding site" evidence="1">
    <location>
        <begin position="132"/>
        <end position="134"/>
    </location>
    <ligand>
        <name>ATP</name>
        <dbReference type="ChEBI" id="CHEBI:30616"/>
    </ligand>
</feature>
<feature type="binding site" evidence="1">
    <location>
        <position position="175"/>
    </location>
    <ligand>
        <name>ATP</name>
        <dbReference type="ChEBI" id="CHEBI:30616"/>
    </ligand>
</feature>
<feature type="binding site" evidence="1">
    <location>
        <position position="185"/>
    </location>
    <ligand>
        <name>ATP</name>
        <dbReference type="ChEBI" id="CHEBI:30616"/>
    </ligand>
</feature>
<feature type="binding site" evidence="1">
    <location>
        <position position="222"/>
    </location>
    <ligand>
        <name>ATP</name>
        <dbReference type="ChEBI" id="CHEBI:30616"/>
    </ligand>
</feature>
<feature type="binding site" evidence="1">
    <location>
        <position position="314"/>
    </location>
    <ligand>
        <name>DNA</name>
        <dbReference type="ChEBI" id="CHEBI:16991"/>
    </ligand>
</feature>
<feature type="binding site" evidence="1">
    <location>
        <position position="319"/>
    </location>
    <ligand>
        <name>DNA</name>
        <dbReference type="ChEBI" id="CHEBI:16991"/>
    </ligand>
</feature>
<proteinExistence type="inferred from homology"/>
<organism>
    <name type="scientific">Mycobacterium tuberculosis (strain ATCC 25177 / H37Ra)</name>
    <dbReference type="NCBI Taxonomy" id="419947"/>
    <lineage>
        <taxon>Bacteria</taxon>
        <taxon>Bacillati</taxon>
        <taxon>Actinomycetota</taxon>
        <taxon>Actinomycetes</taxon>
        <taxon>Mycobacteriales</taxon>
        <taxon>Mycobacteriaceae</taxon>
        <taxon>Mycobacterium</taxon>
        <taxon>Mycobacterium tuberculosis complex</taxon>
    </lineage>
</organism>